<organism>
    <name type="scientific">Thermosipho melanesiensis (strain DSM 12029 / CIP 104789 / BI429)</name>
    <dbReference type="NCBI Taxonomy" id="391009"/>
    <lineage>
        <taxon>Bacteria</taxon>
        <taxon>Thermotogati</taxon>
        <taxon>Thermotogota</taxon>
        <taxon>Thermotogae</taxon>
        <taxon>Thermotogales</taxon>
        <taxon>Fervidobacteriaceae</taxon>
        <taxon>Thermosipho</taxon>
    </lineage>
</organism>
<protein>
    <recommendedName>
        <fullName evidence="1">Small ribosomal subunit protein uS17</fullName>
    </recommendedName>
    <alternativeName>
        <fullName evidence="2">30S ribosomal protein S17</fullName>
    </alternativeName>
</protein>
<name>RS17_THEM4</name>
<accession>A6LLM2</accession>
<dbReference type="EMBL" id="CP000716">
    <property type="protein sequence ID" value="ABR30823.1"/>
    <property type="molecule type" value="Genomic_DNA"/>
</dbReference>
<dbReference type="RefSeq" id="WP_012057184.1">
    <property type="nucleotide sequence ID" value="NC_009616.1"/>
</dbReference>
<dbReference type="SMR" id="A6LLM2"/>
<dbReference type="STRING" id="391009.Tmel_0962"/>
<dbReference type="KEGG" id="tme:Tmel_0962"/>
<dbReference type="eggNOG" id="COG0186">
    <property type="taxonomic scope" value="Bacteria"/>
</dbReference>
<dbReference type="HOGENOM" id="CLU_073626_1_2_0"/>
<dbReference type="OrthoDB" id="9811714at2"/>
<dbReference type="Proteomes" id="UP000001110">
    <property type="component" value="Chromosome"/>
</dbReference>
<dbReference type="GO" id="GO:0022627">
    <property type="term" value="C:cytosolic small ribosomal subunit"/>
    <property type="evidence" value="ECO:0007669"/>
    <property type="project" value="TreeGrafter"/>
</dbReference>
<dbReference type="GO" id="GO:0019843">
    <property type="term" value="F:rRNA binding"/>
    <property type="evidence" value="ECO:0007669"/>
    <property type="project" value="UniProtKB-UniRule"/>
</dbReference>
<dbReference type="GO" id="GO:0003735">
    <property type="term" value="F:structural constituent of ribosome"/>
    <property type="evidence" value="ECO:0007669"/>
    <property type="project" value="InterPro"/>
</dbReference>
<dbReference type="GO" id="GO:0006412">
    <property type="term" value="P:translation"/>
    <property type="evidence" value="ECO:0007669"/>
    <property type="project" value="UniProtKB-UniRule"/>
</dbReference>
<dbReference type="CDD" id="cd00364">
    <property type="entry name" value="Ribosomal_uS17"/>
    <property type="match status" value="1"/>
</dbReference>
<dbReference type="Gene3D" id="2.40.50.140">
    <property type="entry name" value="Nucleic acid-binding proteins"/>
    <property type="match status" value="1"/>
</dbReference>
<dbReference type="HAMAP" id="MF_01345_B">
    <property type="entry name" value="Ribosomal_uS17_B"/>
    <property type="match status" value="1"/>
</dbReference>
<dbReference type="InterPro" id="IPR012340">
    <property type="entry name" value="NA-bd_OB-fold"/>
</dbReference>
<dbReference type="InterPro" id="IPR000266">
    <property type="entry name" value="Ribosomal_uS17"/>
</dbReference>
<dbReference type="InterPro" id="IPR019984">
    <property type="entry name" value="Ribosomal_uS17_bact/chlr"/>
</dbReference>
<dbReference type="InterPro" id="IPR019979">
    <property type="entry name" value="Ribosomal_uS17_CS"/>
</dbReference>
<dbReference type="NCBIfam" id="NF004123">
    <property type="entry name" value="PRK05610.1"/>
    <property type="match status" value="1"/>
</dbReference>
<dbReference type="NCBIfam" id="TIGR03635">
    <property type="entry name" value="uS17_bact"/>
    <property type="match status" value="1"/>
</dbReference>
<dbReference type="PANTHER" id="PTHR10744">
    <property type="entry name" value="40S RIBOSOMAL PROTEIN S11 FAMILY MEMBER"/>
    <property type="match status" value="1"/>
</dbReference>
<dbReference type="PANTHER" id="PTHR10744:SF1">
    <property type="entry name" value="SMALL RIBOSOMAL SUBUNIT PROTEIN US17M"/>
    <property type="match status" value="1"/>
</dbReference>
<dbReference type="Pfam" id="PF00366">
    <property type="entry name" value="Ribosomal_S17"/>
    <property type="match status" value="1"/>
</dbReference>
<dbReference type="PRINTS" id="PR00973">
    <property type="entry name" value="RIBOSOMALS17"/>
</dbReference>
<dbReference type="SUPFAM" id="SSF50249">
    <property type="entry name" value="Nucleic acid-binding proteins"/>
    <property type="match status" value="1"/>
</dbReference>
<dbReference type="PROSITE" id="PS00056">
    <property type="entry name" value="RIBOSOMAL_S17"/>
    <property type="match status" value="1"/>
</dbReference>
<reference key="1">
    <citation type="submission" date="2007-05" db="EMBL/GenBank/DDBJ databases">
        <title>Complete sequence of Thermosipho melanesiensis BI429.</title>
        <authorList>
            <consortium name="US DOE Joint Genome Institute"/>
            <person name="Copeland A."/>
            <person name="Lucas S."/>
            <person name="Lapidus A."/>
            <person name="Barry K."/>
            <person name="Glavina del Rio T."/>
            <person name="Dalin E."/>
            <person name="Tice H."/>
            <person name="Pitluck S."/>
            <person name="Chertkov O."/>
            <person name="Brettin T."/>
            <person name="Bruce D."/>
            <person name="Detter J.C."/>
            <person name="Han C."/>
            <person name="Schmutz J."/>
            <person name="Larimer F."/>
            <person name="Land M."/>
            <person name="Hauser L."/>
            <person name="Kyrpides N."/>
            <person name="Mikhailova N."/>
            <person name="Nelson K."/>
            <person name="Gogarten J.P."/>
            <person name="Noll K."/>
            <person name="Richardson P."/>
        </authorList>
    </citation>
    <scope>NUCLEOTIDE SEQUENCE [LARGE SCALE GENOMIC DNA]</scope>
    <source>
        <strain>DSM 12029 / CIP 104789 / BI429</strain>
    </source>
</reference>
<proteinExistence type="inferred from homology"/>
<keyword id="KW-0687">Ribonucleoprotein</keyword>
<keyword id="KW-0689">Ribosomal protein</keyword>
<keyword id="KW-0694">RNA-binding</keyword>
<keyword id="KW-0699">rRNA-binding</keyword>
<sequence length="99" mass="11395">MPKKRLIGEVLSDKMDKTVVVAVSTLVKHPRVGKYIKRTKKYYAHDENNECRVGDIVEIVESRPLSKLKRWKVERIVERSVFAEKAPEEDLEGGSNNDN</sequence>
<comment type="function">
    <text evidence="1">One of the primary rRNA binding proteins, it binds specifically to the 5'-end of 16S ribosomal RNA.</text>
</comment>
<comment type="subunit">
    <text evidence="1">Part of the 30S ribosomal subunit.</text>
</comment>
<comment type="similarity">
    <text evidence="1">Belongs to the universal ribosomal protein uS17 family.</text>
</comment>
<gene>
    <name evidence="1" type="primary">rpsQ</name>
    <name type="ordered locus">Tmel_0962</name>
</gene>
<evidence type="ECO:0000255" key="1">
    <source>
        <dbReference type="HAMAP-Rule" id="MF_01345"/>
    </source>
</evidence>
<evidence type="ECO:0000305" key="2"/>
<feature type="chain" id="PRO_1000055041" description="Small ribosomal subunit protein uS17">
    <location>
        <begin position="1"/>
        <end position="99"/>
    </location>
</feature>